<proteinExistence type="inferred from homology"/>
<dbReference type="EMBL" id="X65102">
    <property type="protein sequence ID" value="CAH55774.1"/>
    <property type="molecule type" value="Genomic_RNA"/>
</dbReference>
<dbReference type="GO" id="GO:0030430">
    <property type="term" value="C:host cell cytoplasm"/>
    <property type="evidence" value="ECO:0007669"/>
    <property type="project" value="UniProtKB-SubCell"/>
</dbReference>
<dbReference type="GO" id="GO:0005524">
    <property type="term" value="F:ATP binding"/>
    <property type="evidence" value="ECO:0007669"/>
    <property type="project" value="InterPro"/>
</dbReference>
<dbReference type="GO" id="GO:0003723">
    <property type="term" value="F:RNA binding"/>
    <property type="evidence" value="ECO:0007669"/>
    <property type="project" value="UniProtKB-KW"/>
</dbReference>
<dbReference type="GO" id="GO:0052170">
    <property type="term" value="P:symbiont-mediated suppression of host innate immune response"/>
    <property type="evidence" value="ECO:0007669"/>
    <property type="project" value="UniProtKB-KW"/>
</dbReference>
<dbReference type="GO" id="GO:0046740">
    <property type="term" value="P:transport of virus in host, cell to cell"/>
    <property type="evidence" value="ECO:0007669"/>
    <property type="project" value="UniProtKB-KW"/>
</dbReference>
<dbReference type="InterPro" id="IPR027351">
    <property type="entry name" value="(+)RNA_virus_helicase_core_dom"/>
</dbReference>
<dbReference type="Pfam" id="PF01443">
    <property type="entry name" value="Viral_helicase1"/>
    <property type="match status" value="1"/>
</dbReference>
<dbReference type="PROSITE" id="PS51657">
    <property type="entry name" value="PSRV_HELICASE"/>
    <property type="match status" value="1"/>
</dbReference>
<protein>
    <recommendedName>
        <fullName>Movement and silencing protein TGBp1</fullName>
    </recommendedName>
    <alternativeName>
        <fullName>25 kDa protein</fullName>
    </alternativeName>
    <alternativeName>
        <fullName>Silencing suppressor P25</fullName>
    </alternativeName>
    <alternativeName>
        <fullName>Triple gene block 1 protein</fullName>
        <shortName>TGBp1</shortName>
    </alternativeName>
</protein>
<keyword id="KW-1035">Host cytoplasm</keyword>
<keyword id="KW-0945">Host-virus interaction</keyword>
<keyword id="KW-1090">Inhibition of host innate immune response by virus</keyword>
<keyword id="KW-0694">RNA-binding</keyword>
<keyword id="KW-0941">Suppressor of RNA silencing</keyword>
<keyword id="KW-0813">Transport</keyword>
<keyword id="KW-0899">Viral immunoevasion</keyword>
<keyword id="KW-0916">Viral movement protein</keyword>
<feature type="chain" id="PRO_0000222580" description="Movement and silencing protein TGBp1">
    <location>
        <begin position="1"/>
        <end position="232"/>
    </location>
</feature>
<feature type="domain" description="(+)RNA virus helicase ATP-binding">
    <location>
        <begin position="1"/>
        <end position="117"/>
    </location>
</feature>
<feature type="domain" description="(+)RNA virus helicase C-terminal">
    <location>
        <begin position="118"/>
        <end position="232"/>
    </location>
</feature>
<name>TGB1_POPMV</name>
<reference key="1">
    <citation type="journal article" date="1992" name="J. Gen. Virol.">
        <title>Partial nucleotide sequence of poplar mosaic virus RNA confirms its classification as a carlavirus.</title>
        <authorList>
            <person name="Henderson J."/>
            <person name="Gibbs M.J."/>
            <person name="Edwards M.-L."/>
            <person name="Clarke V.A."/>
            <person name="Gardner K.A."/>
            <person name="Cooper J.I."/>
        </authorList>
    </citation>
    <scope>NUCLEOTIDE SEQUENCE [GENOMIC RNA]</scope>
</reference>
<reference key="2">
    <citation type="journal article" date="2005" name="J. Virol. Methods">
        <title>Construction and properties of a gene-silencing vector based on Poplar mosaic virus (genus Carlavirus).</title>
        <authorList>
            <person name="Naylor M."/>
            <person name="Reeves J."/>
            <person name="Cooper J.I."/>
            <person name="Edwards M.-L."/>
            <person name="Wang H."/>
        </authorList>
    </citation>
    <scope>SEQUENCE REVISION</scope>
</reference>
<organismHost>
    <name type="scientific">Populus balsamifera</name>
    <name type="common">Balsam poplar</name>
    <dbReference type="NCBI Taxonomy" id="73824"/>
</organismHost>
<organismHost>
    <name type="scientific">Populus deltoides</name>
    <name type="common">Eastern poplar</name>
    <name type="synonym">Eastern cottonwood</name>
    <dbReference type="NCBI Taxonomy" id="3696"/>
</organismHost>
<organismHost>
    <name type="scientific">Populus maximowiczii</name>
    <name type="common">Japanese poplar</name>
    <dbReference type="NCBI Taxonomy" id="75703"/>
</organismHost>
<organismHost>
    <name type="scientific">Populus nigra</name>
    <name type="common">Lombardy poplar</name>
    <dbReference type="NCBI Taxonomy" id="3691"/>
</organismHost>
<organismHost>
    <name type="scientific">Populus trichocarpa</name>
    <name type="common">Western balsam poplar</name>
    <name type="synonym">Populus balsamifera subsp. trichocarpa</name>
    <dbReference type="NCBI Taxonomy" id="3694"/>
</organismHost>
<accession>Q02109</accession>
<accession>Q629I9</accession>
<sequence>MDVLINKLASCNFSRTRNQVGKPCIINCVPGAGKSTLIRELLNSDSRFRAYTFGEADPKNLSGRRILPASELQNAPQGALIIIDEYTEGSWEPGKICAAFGDPIQSRGPGIVADFVCNKTKRFGSSTCELLNGFGFEIHSEKEDICLVRDFFEVEPEGTVIAFESEVKDILARHFVEFEDICSIRGKTFEEVTFFTASNSIPEHLRADFFQCLTRHKNKLTIACPDATFAPS</sequence>
<organism>
    <name type="scientific">Poplar mosaic virus (isolate ATCC Pv275)</name>
    <name type="common">PMV</name>
    <dbReference type="NCBI Taxonomy" id="31709"/>
    <lineage>
        <taxon>Viruses</taxon>
        <taxon>Riboviria</taxon>
        <taxon>Orthornavirae</taxon>
        <taxon>Kitrinoviricota</taxon>
        <taxon>Alsuviricetes</taxon>
        <taxon>Tymovirales</taxon>
        <taxon>Betaflexiviridae</taxon>
        <taxon>Quinvirinae</taxon>
        <taxon>Carlavirus</taxon>
        <taxon>Poplar mosaic virus</taxon>
    </lineage>
</organism>
<comment type="function">
    <text evidence="1">Transports viral genome to neighboring plant cells directly through plasmosdesmata, without any budding. The movement protein allows efficient cell to cell propagation, by bypassing the host cell wall barrier. Increases plasmodesma size exclusion limit. Acts as a suppressor of RNA-mediated gene silencing, also known as post-transcriptional gene silencing (PTGS), a mechanism of plant viral defense that limits the accumulation of viral RNAs (By similarity).</text>
</comment>
<comment type="subunit">
    <text evidence="1">Homodimer and homooligomer. Interacts with capsid protein. Interacts with host AGO1; this interaction targets the host protein for degradation, thereby suppressing the antiviral RNA silencing (By similarity).</text>
</comment>
<comment type="subcellular location">
    <subcellularLocation>
        <location evidence="1">Host cytoplasm</location>
    </subcellularLocation>
</comment>
<comment type="miscellaneous">
    <text>TGBp1, TGBp2 and TGBp3 seem to act together for cell-to-cell propagation. TGBp1 is the main movement protein that physically cross the plasmodesma with the viral genome. TGBp2 and TGBp3 would facilitate TGBp1 function.</text>
</comment>
<comment type="similarity">
    <text evidence="2">Belongs to the Tymovirales TGBp1 protein family.</text>
</comment>
<evidence type="ECO:0000250" key="1"/>
<evidence type="ECO:0000305" key="2"/>
<gene>
    <name type="ORF">ORF2</name>
</gene>